<name>ARGR_STAA3</name>
<organism>
    <name type="scientific">Staphylococcus aureus (strain USA300)</name>
    <dbReference type="NCBI Taxonomy" id="367830"/>
    <lineage>
        <taxon>Bacteria</taxon>
        <taxon>Bacillati</taxon>
        <taxon>Bacillota</taxon>
        <taxon>Bacilli</taxon>
        <taxon>Bacillales</taxon>
        <taxon>Staphylococcaceae</taxon>
        <taxon>Staphylococcus</taxon>
    </lineage>
</organism>
<dbReference type="EMBL" id="CP000255">
    <property type="protein sequence ID" value="ABD20514.1"/>
    <property type="molecule type" value="Genomic_DNA"/>
</dbReference>
<dbReference type="RefSeq" id="WP_001124985.1">
    <property type="nucleotide sequence ID" value="NZ_CP027476.1"/>
</dbReference>
<dbReference type="SMR" id="Q2FGL3"/>
<dbReference type="GeneID" id="98345891"/>
<dbReference type="KEGG" id="saa:SAUSA300_1469"/>
<dbReference type="HOGENOM" id="CLU_097103_3_0_9"/>
<dbReference type="UniPathway" id="UPA00068"/>
<dbReference type="Proteomes" id="UP000001939">
    <property type="component" value="Chromosome"/>
</dbReference>
<dbReference type="GO" id="GO:0005737">
    <property type="term" value="C:cytoplasm"/>
    <property type="evidence" value="ECO:0007669"/>
    <property type="project" value="UniProtKB-SubCell"/>
</dbReference>
<dbReference type="GO" id="GO:0034618">
    <property type="term" value="F:arginine binding"/>
    <property type="evidence" value="ECO:0007669"/>
    <property type="project" value="InterPro"/>
</dbReference>
<dbReference type="GO" id="GO:0003677">
    <property type="term" value="F:DNA binding"/>
    <property type="evidence" value="ECO:0007669"/>
    <property type="project" value="UniProtKB-KW"/>
</dbReference>
<dbReference type="GO" id="GO:0003700">
    <property type="term" value="F:DNA-binding transcription factor activity"/>
    <property type="evidence" value="ECO:0007669"/>
    <property type="project" value="UniProtKB-UniRule"/>
</dbReference>
<dbReference type="GO" id="GO:0006526">
    <property type="term" value="P:L-arginine biosynthetic process"/>
    <property type="evidence" value="ECO:0007669"/>
    <property type="project" value="UniProtKB-UniPathway"/>
</dbReference>
<dbReference type="GO" id="GO:0051259">
    <property type="term" value="P:protein complex oligomerization"/>
    <property type="evidence" value="ECO:0007669"/>
    <property type="project" value="InterPro"/>
</dbReference>
<dbReference type="GO" id="GO:1900079">
    <property type="term" value="P:regulation of arginine biosynthetic process"/>
    <property type="evidence" value="ECO:0007669"/>
    <property type="project" value="UniProtKB-UniRule"/>
</dbReference>
<dbReference type="Gene3D" id="3.30.1360.40">
    <property type="match status" value="1"/>
</dbReference>
<dbReference type="Gene3D" id="1.10.10.10">
    <property type="entry name" value="Winged helix-like DNA-binding domain superfamily/Winged helix DNA-binding domain"/>
    <property type="match status" value="1"/>
</dbReference>
<dbReference type="HAMAP" id="MF_00173">
    <property type="entry name" value="Arg_repressor"/>
    <property type="match status" value="1"/>
</dbReference>
<dbReference type="InterPro" id="IPR001669">
    <property type="entry name" value="Arg_repress"/>
</dbReference>
<dbReference type="InterPro" id="IPR020899">
    <property type="entry name" value="Arg_repress_C"/>
</dbReference>
<dbReference type="InterPro" id="IPR036251">
    <property type="entry name" value="Arg_repress_C_sf"/>
</dbReference>
<dbReference type="InterPro" id="IPR020900">
    <property type="entry name" value="Arg_repress_DNA-bd"/>
</dbReference>
<dbReference type="InterPro" id="IPR036388">
    <property type="entry name" value="WH-like_DNA-bd_sf"/>
</dbReference>
<dbReference type="InterPro" id="IPR036390">
    <property type="entry name" value="WH_DNA-bd_sf"/>
</dbReference>
<dbReference type="NCBIfam" id="TIGR01529">
    <property type="entry name" value="argR_whole"/>
    <property type="match status" value="1"/>
</dbReference>
<dbReference type="NCBIfam" id="NF003281">
    <property type="entry name" value="PRK04280.1"/>
    <property type="match status" value="1"/>
</dbReference>
<dbReference type="PANTHER" id="PTHR34471">
    <property type="entry name" value="ARGININE REPRESSOR"/>
    <property type="match status" value="1"/>
</dbReference>
<dbReference type="PANTHER" id="PTHR34471:SF1">
    <property type="entry name" value="ARGININE REPRESSOR"/>
    <property type="match status" value="1"/>
</dbReference>
<dbReference type="Pfam" id="PF01316">
    <property type="entry name" value="Arg_repressor"/>
    <property type="match status" value="1"/>
</dbReference>
<dbReference type="Pfam" id="PF02863">
    <property type="entry name" value="Arg_repressor_C"/>
    <property type="match status" value="1"/>
</dbReference>
<dbReference type="PRINTS" id="PR01467">
    <property type="entry name" value="ARGREPRESSOR"/>
</dbReference>
<dbReference type="SUPFAM" id="SSF55252">
    <property type="entry name" value="C-terminal domain of arginine repressor"/>
    <property type="match status" value="1"/>
</dbReference>
<dbReference type="SUPFAM" id="SSF46785">
    <property type="entry name" value="Winged helix' DNA-binding domain"/>
    <property type="match status" value="1"/>
</dbReference>
<gene>
    <name evidence="1" type="primary">argR</name>
    <name type="ordered locus">SAUSA300_1469</name>
</gene>
<reference key="1">
    <citation type="journal article" date="2006" name="Lancet">
        <title>Complete genome sequence of USA300, an epidemic clone of community-acquired meticillin-resistant Staphylococcus aureus.</title>
        <authorList>
            <person name="Diep B.A."/>
            <person name="Gill S.R."/>
            <person name="Chang R.F."/>
            <person name="Phan T.H."/>
            <person name="Chen J.H."/>
            <person name="Davidson M.G."/>
            <person name="Lin F."/>
            <person name="Lin J."/>
            <person name="Carleton H.A."/>
            <person name="Mongodin E.F."/>
            <person name="Sensabaugh G.F."/>
            <person name="Perdreau-Remington F."/>
        </authorList>
    </citation>
    <scope>NUCLEOTIDE SEQUENCE [LARGE SCALE GENOMIC DNA]</scope>
    <source>
        <strain>USA300</strain>
    </source>
</reference>
<comment type="function">
    <text evidence="1">Regulates arginine biosynthesis genes.</text>
</comment>
<comment type="pathway">
    <text>Amino-acid biosynthesis; L-arginine biosynthesis [regulation].</text>
</comment>
<comment type="subcellular location">
    <subcellularLocation>
        <location evidence="1">Cytoplasm</location>
    </subcellularLocation>
</comment>
<comment type="similarity">
    <text evidence="1">Belongs to the ArgR family.</text>
</comment>
<proteinExistence type="inferred from homology"/>
<evidence type="ECO:0000255" key="1">
    <source>
        <dbReference type="HAMAP-Rule" id="MF_00173"/>
    </source>
</evidence>
<feature type="chain" id="PRO_1000023604" description="Arginine repressor">
    <location>
        <begin position="1"/>
        <end position="150"/>
    </location>
</feature>
<keyword id="KW-0028">Amino-acid biosynthesis</keyword>
<keyword id="KW-0055">Arginine biosynthesis</keyword>
<keyword id="KW-0963">Cytoplasm</keyword>
<keyword id="KW-0238">DNA-binding</keyword>
<keyword id="KW-0678">Repressor</keyword>
<keyword id="KW-0804">Transcription</keyword>
<keyword id="KW-0805">Transcription regulation</keyword>
<accession>Q2FGL3</accession>
<protein>
    <recommendedName>
        <fullName evidence="1">Arginine repressor</fullName>
    </recommendedName>
</protein>
<sequence length="150" mass="17098">MPKKSVRHIKIREIISNEQIETQDELVKRLNDYDLNVTQATVSRDIKELQLIKVPIPSGQYVYSLPNDRKFHPLEKLGRYLMDSFVNIDGTDNLLVLKTLPGNAQSIGAILDQINWEEVLGTICGDDTCLIICRSKEASDEIKSRIFNLL</sequence>